<keyword id="KW-0150">Chloroplast</keyword>
<keyword id="KW-0934">Plastid</keyword>
<keyword id="KW-0687">Ribonucleoprotein</keyword>
<keyword id="KW-0689">Ribosomal protein</keyword>
<keyword id="KW-0694">RNA-binding</keyword>
<keyword id="KW-0699">rRNA-binding</keyword>
<name>RR12_HORVU</name>
<proteinExistence type="inferred from homology"/>
<comment type="function">
    <text evidence="1">With S4 and S5 plays an important role in translational accuracy. Located at the interface of the 30S and 50S subunits (By similarity).</text>
</comment>
<comment type="subunit">
    <text>Part of the 30S ribosomal subunit.</text>
</comment>
<comment type="subcellular location">
    <subcellularLocation>
        <location>Plastid</location>
        <location>Chloroplast</location>
    </subcellularLocation>
</comment>
<comment type="similarity">
    <text evidence="3">Belongs to the universal ribosomal protein uS12 family.</text>
</comment>
<feature type="chain" id="PRO_0000146404" description="Small ribosomal subunit protein uS12cz/uS12cy">
    <location>
        <begin position="1"/>
        <end position="124"/>
    </location>
</feature>
<accession>P48856</accession>
<accession>A1E9G9</accession>
<organism>
    <name type="scientific">Hordeum vulgare</name>
    <name type="common">Barley</name>
    <dbReference type="NCBI Taxonomy" id="4513"/>
    <lineage>
        <taxon>Eukaryota</taxon>
        <taxon>Viridiplantae</taxon>
        <taxon>Streptophyta</taxon>
        <taxon>Embryophyta</taxon>
        <taxon>Tracheophyta</taxon>
        <taxon>Spermatophyta</taxon>
        <taxon>Magnoliopsida</taxon>
        <taxon>Liliopsida</taxon>
        <taxon>Poales</taxon>
        <taxon>Poaceae</taxon>
        <taxon>BOP clade</taxon>
        <taxon>Pooideae</taxon>
        <taxon>Triticodae</taxon>
        <taxon>Triticeae</taxon>
        <taxon>Hordeinae</taxon>
        <taxon>Hordeum</taxon>
    </lineage>
</organism>
<geneLocation type="chloroplast"/>
<evidence type="ECO:0000250" key="1"/>
<evidence type="ECO:0000255" key="2">
    <source>
        <dbReference type="HAMAP-Rule" id="MF_00403"/>
    </source>
</evidence>
<evidence type="ECO:0000305" key="3"/>
<reference key="1">
    <citation type="journal article" date="1996" name="Plant Mol. Biol.">
        <title>Impaired splicing of the rps12 transcript in ribosome-deficient plastids.</title>
        <authorList>
            <person name="Huebschmann T."/>
            <person name="Hess W."/>
            <person name="Boerner T."/>
        </authorList>
    </citation>
    <scope>NUCLEOTIDE SEQUENCE [GENOMIC DNA]</scope>
    <source>
        <strain>cv. Haisa</strain>
    </source>
</reference>
<reference key="2">
    <citation type="journal article" date="2007" name="Theor. Appl. Genet.">
        <title>Complete chloroplast genome sequences of Hordeum vulgare, Sorghum bicolor and Agrostis stolonifera, and comparative analyses with other grass genomes.</title>
        <authorList>
            <person name="Saski C."/>
            <person name="Lee S.-B."/>
            <person name="Fjellheim S."/>
            <person name="Guda C."/>
            <person name="Jansen R.K."/>
            <person name="Luo H."/>
            <person name="Tomkins J."/>
            <person name="Rognli O.A."/>
            <person name="Daniell H."/>
            <person name="Clarke J.L."/>
        </authorList>
    </citation>
    <scope>NUCLEOTIDE SEQUENCE [LARGE SCALE GENOMIC DNA]</scope>
    <source>
        <strain>cv. Morex</strain>
    </source>
</reference>
<sequence>MPTVKQLIRNARQPIRNARKTAALKGCPQRRGTCARVYTINPKKPNSALRKVARVRLTSGFEITAYIPGIGHNLQEHSVVLVRGGRVKDLPGVRYRIIRGTLDAVAVKNRQQGRSKYGVKKPKK</sequence>
<protein>
    <recommendedName>
        <fullName evidence="2">Small ribosomal subunit protein uS12cz/uS12cy</fullName>
    </recommendedName>
    <alternativeName>
        <fullName evidence="3">30S ribosomal protein S12, chloroplastic</fullName>
    </alternativeName>
</protein>
<dbReference type="EMBL" id="X89562">
    <property type="protein sequence ID" value="CAA61739.1"/>
    <property type="molecule type" value="Genomic_DNA"/>
</dbReference>
<dbReference type="EMBL" id="X89563">
    <property type="protein sequence ID" value="CAA61739.1"/>
    <property type="status" value="JOINED"/>
    <property type="molecule type" value="Genomic_DNA"/>
</dbReference>
<dbReference type="EMBL" id="EF115541">
    <property type="protein sequence ID" value="ABK79457.1"/>
    <property type="molecule type" value="Genomic_DNA"/>
</dbReference>
<dbReference type="EMBL" id="EF115541">
    <property type="protein sequence ID" value="ABK79470.1"/>
    <property type="molecule type" value="Genomic_DNA"/>
</dbReference>
<dbReference type="PIR" id="S65048">
    <property type="entry name" value="S65048"/>
</dbReference>
<dbReference type="SMR" id="P48856"/>
<dbReference type="GO" id="GO:0009507">
    <property type="term" value="C:chloroplast"/>
    <property type="evidence" value="ECO:0007669"/>
    <property type="project" value="UniProtKB-SubCell"/>
</dbReference>
<dbReference type="GO" id="GO:0015935">
    <property type="term" value="C:small ribosomal subunit"/>
    <property type="evidence" value="ECO:0007669"/>
    <property type="project" value="InterPro"/>
</dbReference>
<dbReference type="GO" id="GO:0019843">
    <property type="term" value="F:rRNA binding"/>
    <property type="evidence" value="ECO:0007669"/>
    <property type="project" value="UniProtKB-UniRule"/>
</dbReference>
<dbReference type="GO" id="GO:0003735">
    <property type="term" value="F:structural constituent of ribosome"/>
    <property type="evidence" value="ECO:0007669"/>
    <property type="project" value="InterPro"/>
</dbReference>
<dbReference type="GO" id="GO:0006412">
    <property type="term" value="P:translation"/>
    <property type="evidence" value="ECO:0007669"/>
    <property type="project" value="UniProtKB-UniRule"/>
</dbReference>
<dbReference type="CDD" id="cd03368">
    <property type="entry name" value="Ribosomal_S12"/>
    <property type="match status" value="1"/>
</dbReference>
<dbReference type="FunFam" id="2.40.50.140:FF:000008">
    <property type="entry name" value="30S ribosomal protein S12, chloroplastic"/>
    <property type="match status" value="1"/>
</dbReference>
<dbReference type="Gene3D" id="2.40.50.140">
    <property type="entry name" value="Nucleic acid-binding proteins"/>
    <property type="match status" value="1"/>
</dbReference>
<dbReference type="HAMAP" id="MF_00403_B">
    <property type="entry name" value="Ribosomal_uS12_B"/>
    <property type="match status" value="1"/>
</dbReference>
<dbReference type="InterPro" id="IPR012340">
    <property type="entry name" value="NA-bd_OB-fold"/>
</dbReference>
<dbReference type="InterPro" id="IPR006032">
    <property type="entry name" value="Ribosomal_uS12"/>
</dbReference>
<dbReference type="InterPro" id="IPR005679">
    <property type="entry name" value="Ribosomal_uS12_bac"/>
</dbReference>
<dbReference type="NCBIfam" id="TIGR00981">
    <property type="entry name" value="rpsL_bact"/>
    <property type="match status" value="1"/>
</dbReference>
<dbReference type="PANTHER" id="PTHR11652">
    <property type="entry name" value="30S RIBOSOMAL PROTEIN S12 FAMILY MEMBER"/>
    <property type="match status" value="1"/>
</dbReference>
<dbReference type="Pfam" id="PF00164">
    <property type="entry name" value="Ribosom_S12_S23"/>
    <property type="match status" value="1"/>
</dbReference>
<dbReference type="PIRSF" id="PIRSF002133">
    <property type="entry name" value="Ribosomal_S12/S23"/>
    <property type="match status" value="1"/>
</dbReference>
<dbReference type="PRINTS" id="PR01034">
    <property type="entry name" value="RIBOSOMALS12"/>
</dbReference>
<dbReference type="SUPFAM" id="SSF50249">
    <property type="entry name" value="Nucleic acid-binding proteins"/>
    <property type="match status" value="1"/>
</dbReference>
<dbReference type="PROSITE" id="PS00055">
    <property type="entry name" value="RIBOSOMAL_S12"/>
    <property type="match status" value="1"/>
</dbReference>
<gene>
    <name type="primary">rps12-A</name>
</gene>
<gene>
    <name type="primary">rps12-B</name>
</gene>